<accession>Q2RHR2</accession>
<sequence length="91" mass="10575">MILIYDINTEDNDGKRRLVKIMKTSRKYLSHVQKSVFEGDITEGQISLLKKEIMAIVNMKKDFVIIYSLRDGVKLNREILTDTPDPTDNFL</sequence>
<protein>
    <recommendedName>
        <fullName evidence="1">CRISPR-associated endoribonuclease Cas2 2</fullName>
        <ecNumber evidence="1">3.1.-.-</ecNumber>
    </recommendedName>
</protein>
<comment type="function">
    <text evidence="1">CRISPR (clustered regularly interspaced short palindromic repeat), is an adaptive immune system that provides protection against mobile genetic elements (viruses, transposable elements and conjugative plasmids). CRISPR clusters contain sequences complementary to antecedent mobile elements and target invading nucleic acids. CRISPR clusters are transcribed and processed into CRISPR RNA (crRNA). Functions as a ssRNA-specific endoribonuclease. Involved in the integration of spacer DNA into the CRISPR cassette.</text>
</comment>
<comment type="cofactor">
    <cofactor evidence="1">
        <name>Mg(2+)</name>
        <dbReference type="ChEBI" id="CHEBI:18420"/>
    </cofactor>
</comment>
<comment type="subunit">
    <text evidence="1">Homodimer, forms a heterotetramer with a Cas1 homodimer.</text>
</comment>
<comment type="similarity">
    <text evidence="1">Belongs to the CRISPR-associated endoribonuclease Cas2 protein family.</text>
</comment>
<gene>
    <name evidence="1" type="primary">cas2-2</name>
    <name type="ordered locus">Moth_1726</name>
</gene>
<organism>
    <name type="scientific">Moorella thermoacetica (strain ATCC 39073 / JCM 9320)</name>
    <dbReference type="NCBI Taxonomy" id="264732"/>
    <lineage>
        <taxon>Bacteria</taxon>
        <taxon>Bacillati</taxon>
        <taxon>Bacillota</taxon>
        <taxon>Clostridia</taxon>
        <taxon>Moorellales</taxon>
        <taxon>Moorellaceae</taxon>
        <taxon>Moorella</taxon>
    </lineage>
</organism>
<keyword id="KW-0051">Antiviral defense</keyword>
<keyword id="KW-0255">Endonuclease</keyword>
<keyword id="KW-0378">Hydrolase</keyword>
<keyword id="KW-0460">Magnesium</keyword>
<keyword id="KW-0479">Metal-binding</keyword>
<keyword id="KW-0540">Nuclease</keyword>
<dbReference type="EC" id="3.1.-.-" evidence="1"/>
<dbReference type="EMBL" id="CP000232">
    <property type="protein sequence ID" value="ABC20027.1"/>
    <property type="molecule type" value="Genomic_DNA"/>
</dbReference>
<dbReference type="RefSeq" id="YP_430570.1">
    <property type="nucleotide sequence ID" value="NC_007644.1"/>
</dbReference>
<dbReference type="SMR" id="Q2RHR2"/>
<dbReference type="STRING" id="264732.Moth_1726"/>
<dbReference type="EnsemblBacteria" id="ABC20027">
    <property type="protein sequence ID" value="ABC20027"/>
    <property type="gene ID" value="Moth_1726"/>
</dbReference>
<dbReference type="KEGG" id="mta:Moth_1726"/>
<dbReference type="PATRIC" id="fig|264732.11.peg.1872"/>
<dbReference type="eggNOG" id="COG1343">
    <property type="taxonomic scope" value="Bacteria"/>
</dbReference>
<dbReference type="HOGENOM" id="CLU_161124_0_1_9"/>
<dbReference type="OrthoDB" id="9798176at2"/>
<dbReference type="GO" id="GO:0046872">
    <property type="term" value="F:metal ion binding"/>
    <property type="evidence" value="ECO:0007669"/>
    <property type="project" value="UniProtKB-KW"/>
</dbReference>
<dbReference type="GO" id="GO:0004521">
    <property type="term" value="F:RNA endonuclease activity"/>
    <property type="evidence" value="ECO:0007669"/>
    <property type="project" value="InterPro"/>
</dbReference>
<dbReference type="GO" id="GO:0051607">
    <property type="term" value="P:defense response to virus"/>
    <property type="evidence" value="ECO:0007669"/>
    <property type="project" value="UniProtKB-UniRule"/>
</dbReference>
<dbReference type="GO" id="GO:0043571">
    <property type="term" value="P:maintenance of CRISPR repeat elements"/>
    <property type="evidence" value="ECO:0007669"/>
    <property type="project" value="UniProtKB-UniRule"/>
</dbReference>
<dbReference type="CDD" id="cd09725">
    <property type="entry name" value="Cas2_I_II_III"/>
    <property type="match status" value="1"/>
</dbReference>
<dbReference type="Gene3D" id="3.30.70.240">
    <property type="match status" value="1"/>
</dbReference>
<dbReference type="HAMAP" id="MF_01471">
    <property type="entry name" value="Cas2"/>
    <property type="match status" value="1"/>
</dbReference>
<dbReference type="InterPro" id="IPR021127">
    <property type="entry name" value="CRISPR_associated_Cas2"/>
</dbReference>
<dbReference type="InterPro" id="IPR019199">
    <property type="entry name" value="Virulence_VapD/CRISPR_Cas2"/>
</dbReference>
<dbReference type="NCBIfam" id="TIGR01573">
    <property type="entry name" value="cas2"/>
    <property type="match status" value="1"/>
</dbReference>
<dbReference type="PANTHER" id="PTHR34405">
    <property type="entry name" value="CRISPR-ASSOCIATED ENDORIBONUCLEASE CAS2"/>
    <property type="match status" value="1"/>
</dbReference>
<dbReference type="PANTHER" id="PTHR34405:SF1">
    <property type="entry name" value="CRISPR-ASSOCIATED ENDORIBONUCLEASE CAS2"/>
    <property type="match status" value="1"/>
</dbReference>
<dbReference type="Pfam" id="PF09827">
    <property type="entry name" value="CRISPR_Cas2"/>
    <property type="match status" value="1"/>
</dbReference>
<dbReference type="SUPFAM" id="SSF143430">
    <property type="entry name" value="TTP0101/SSO1404-like"/>
    <property type="match status" value="1"/>
</dbReference>
<feature type="chain" id="PRO_0000417721" description="CRISPR-associated endoribonuclease Cas2 2">
    <location>
        <begin position="1"/>
        <end position="91"/>
    </location>
</feature>
<feature type="binding site" evidence="1">
    <location>
        <position position="6"/>
    </location>
    <ligand>
        <name>Mg(2+)</name>
        <dbReference type="ChEBI" id="CHEBI:18420"/>
        <note>catalytic</note>
    </ligand>
</feature>
<reference key="1">
    <citation type="journal article" date="2008" name="Environ. Microbiol.">
        <title>The complete genome sequence of Moorella thermoacetica (f. Clostridium thermoaceticum).</title>
        <authorList>
            <person name="Pierce E."/>
            <person name="Xie G."/>
            <person name="Barabote R.D."/>
            <person name="Saunders E."/>
            <person name="Han C.S."/>
            <person name="Detter J.C."/>
            <person name="Richardson P."/>
            <person name="Brettin T.S."/>
            <person name="Das A."/>
            <person name="Ljungdahl L.G."/>
            <person name="Ragsdale S.W."/>
        </authorList>
    </citation>
    <scope>NUCLEOTIDE SEQUENCE [LARGE SCALE GENOMIC DNA]</scope>
    <source>
        <strain>ATCC 39073 / JCM 9320</strain>
    </source>
</reference>
<evidence type="ECO:0000255" key="1">
    <source>
        <dbReference type="HAMAP-Rule" id="MF_01471"/>
    </source>
</evidence>
<proteinExistence type="inferred from homology"/>
<name>CAS2B_MOOTA</name>